<comment type="function">
    <text evidence="1">Minor protein of the capsid that localizes along the inner surface of the virion, within the central cavities beneath the L1 pentamers. Plays a role in capsid stabilization through interaction with the major capsid protein L1. Once the virion enters the host cell, L2 escorts the genomic DNA into the nucleus by promoting escape from the endosomal compartments and traffic through the host Golgi network. Mechanistically, the C-terminus of L2 possesses a cell-penetrating peptide that protudes from the host endosome, interacts with host cytoplasmic retromer cargo and thereby mediates the capsid delivery to the host trans-Golgi network. Plays a role through its interaction with host dynein in the intracellular microtubule-dependent transport of viral capsid toward the nucleus. Mediates the viral genome import into the nucleus through binding to host importins. Once within the nucleus, L2 localizes viral genomes to host PML bodies in order to activate early gene expression for establishment of infection. Later on, promotes late gene expression by interacting with the viral E2 protein and by inhibiting its transcriptional activation functions. During virion assembly, encapsidates the genome by direct interaction with the viral DNA.</text>
</comment>
<comment type="subunit">
    <text evidence="1">Interacts with major capsid protein L1. Interacts with E2; this interaction inhibits E2 transcriptional activity but not the DNA replication function E2. Interacts with host GADD45GIP1. Interacts with host HSPA8; this interaction is required for L2 nuclear translocation. Interacts with host importins KPNB2 and KPNB3. Forms a complex with importin alpha2-beta1 heterodimers via interaction with the importin alpha2 adapter. Interacts with host DYNLT1; this interaction is essential for virus intracellular transport during entry. Interacts (via C-terminus) with host retromer subunits VPS35 and VPS29.</text>
</comment>
<comment type="subcellular location">
    <subcellularLocation>
        <location evidence="1">Virion</location>
    </subcellularLocation>
    <subcellularLocation>
        <location evidence="1">Host nucleus</location>
    </subcellularLocation>
    <subcellularLocation>
        <location evidence="1">Host early endosome</location>
    </subcellularLocation>
    <subcellularLocation>
        <location evidence="1">Host Golgi apparatus</location>
    </subcellularLocation>
</comment>
<comment type="PTM">
    <text evidence="1">Highly phosphorylated.</text>
</comment>
<comment type="similarity">
    <text evidence="1">Belongs to the papillomaviridae L2 protein family.</text>
</comment>
<proteinExistence type="evidence at protein level"/>
<feature type="chain" id="PRO_0000133569" description="Minor capsid protein L2">
    <location>
        <begin position="1"/>
        <end position="521"/>
    </location>
</feature>
<feature type="short sequence motif" description="Nuclear localization signal" evidence="1">
    <location>
        <begin position="1"/>
        <end position="10"/>
    </location>
</feature>
<feature type="short sequence motif" description="Nuclear localization signal" evidence="1">
    <location>
        <begin position="512"/>
        <end position="518"/>
    </location>
</feature>
<feature type="disulfide bond" evidence="1">
    <location>
        <begin position="19"/>
        <end position="25"/>
    </location>
</feature>
<organism>
    <name type="scientific">Human papillomavirus 4</name>
    <dbReference type="NCBI Taxonomy" id="10617"/>
    <lineage>
        <taxon>Viruses</taxon>
        <taxon>Monodnaviria</taxon>
        <taxon>Shotokuvirae</taxon>
        <taxon>Cossaviricota</taxon>
        <taxon>Papovaviricetes</taxon>
        <taxon>Zurhausenvirales</taxon>
        <taxon>Papillomaviridae</taxon>
        <taxon>Firstpapillomavirinae</taxon>
        <taxon>Gammapapillomavirus</taxon>
        <taxon>Gammapapillomavirus 1</taxon>
    </lineage>
</organism>
<name>VL2_HPV04</name>
<evidence type="ECO:0000255" key="1">
    <source>
        <dbReference type="HAMAP-Rule" id="MF_04003"/>
    </source>
</evidence>
<dbReference type="EMBL" id="X70827">
    <property type="protein sequence ID" value="CAA50162.1"/>
    <property type="molecule type" value="Genomic_DNA"/>
</dbReference>
<dbReference type="RefSeq" id="NP_040894.1">
    <property type="nucleotide sequence ID" value="NC_001457.1"/>
</dbReference>
<dbReference type="PDB" id="8JOY">
    <property type="method" value="X-ray"/>
    <property type="resolution" value="2.61 A"/>
    <property type="chains" value="B=251-257"/>
</dbReference>
<dbReference type="PDBsum" id="8JOY"/>
<dbReference type="SMR" id="Q07862"/>
<dbReference type="KEGG" id="vg:1489451"/>
<dbReference type="OrthoDB" id="8047at10239"/>
<dbReference type="Proteomes" id="UP000009253">
    <property type="component" value="Genome"/>
</dbReference>
<dbReference type="GO" id="GO:0043657">
    <property type="term" value="C:host cell"/>
    <property type="evidence" value="ECO:0007669"/>
    <property type="project" value="GOC"/>
</dbReference>
<dbReference type="GO" id="GO:0044174">
    <property type="term" value="C:host cell endosome"/>
    <property type="evidence" value="ECO:0007669"/>
    <property type="project" value="UniProtKB-KW"/>
</dbReference>
<dbReference type="GO" id="GO:0044177">
    <property type="term" value="C:host cell Golgi apparatus"/>
    <property type="evidence" value="ECO:0007669"/>
    <property type="project" value="UniProtKB-SubCell"/>
</dbReference>
<dbReference type="GO" id="GO:0042025">
    <property type="term" value="C:host cell nucleus"/>
    <property type="evidence" value="ECO:0007669"/>
    <property type="project" value="UniProtKB-SubCell"/>
</dbReference>
<dbReference type="GO" id="GO:0019028">
    <property type="term" value="C:viral capsid"/>
    <property type="evidence" value="ECO:0007669"/>
    <property type="project" value="UniProtKB-UniRule"/>
</dbReference>
<dbReference type="GO" id="GO:0003677">
    <property type="term" value="F:DNA binding"/>
    <property type="evidence" value="ECO:0007669"/>
    <property type="project" value="UniProtKB-UniRule"/>
</dbReference>
<dbReference type="GO" id="GO:0005198">
    <property type="term" value="F:structural molecule activity"/>
    <property type="evidence" value="ECO:0007669"/>
    <property type="project" value="UniProtKB-UniRule"/>
</dbReference>
<dbReference type="GO" id="GO:0075521">
    <property type="term" value="P:microtubule-dependent intracellular transport of viral material towards nucleus"/>
    <property type="evidence" value="ECO:0007669"/>
    <property type="project" value="UniProtKB-UniRule"/>
</dbReference>
<dbReference type="GO" id="GO:0046718">
    <property type="term" value="P:symbiont entry into host cell"/>
    <property type="evidence" value="ECO:0007669"/>
    <property type="project" value="UniProtKB-KW"/>
</dbReference>
<dbReference type="GO" id="GO:0075732">
    <property type="term" value="P:viral penetration into host nucleus"/>
    <property type="evidence" value="ECO:0007669"/>
    <property type="project" value="UniProtKB-KW"/>
</dbReference>
<dbReference type="HAMAP" id="MF_04003">
    <property type="entry name" value="PPV_L2"/>
    <property type="match status" value="1"/>
</dbReference>
<dbReference type="InterPro" id="IPR000784">
    <property type="entry name" value="Late_L2"/>
</dbReference>
<dbReference type="Pfam" id="PF00513">
    <property type="entry name" value="Late_protein_L2"/>
    <property type="match status" value="1"/>
</dbReference>
<reference key="1">
    <citation type="journal article" date="1993" name="Virology">
        <title>Two novel types of human papillomavirus, HPV 63 and HPV 65: comparisons of their clinical and histological features and DNA sequences to other HPV types.</title>
        <authorList>
            <person name="Egawa K."/>
            <person name="Delius H."/>
            <person name="Matsukura T."/>
            <person name="Kawashima M."/>
            <person name="de Villiers E.M."/>
        </authorList>
    </citation>
    <scope>NUCLEOTIDE SEQUENCE [GENOMIC DNA]</scope>
</reference>
<accession>Q07862</accession>
<protein>
    <recommendedName>
        <fullName evidence="1">Minor capsid protein L2</fullName>
    </recommendedName>
</protein>
<gene>
    <name evidence="1" type="primary">L2</name>
</gene>
<sequence length="521" mass="56307">MQSLSRRKRDSVPNLYAKCQLSGNCLPDVKNKVEADTLADRLLRWLGSVIYLGGLGIGTGRGSGGSTGYNPIGAPSRVTPSGTLVRPTVPVESLGPSEIIPIDAIDPTTSSVVPLEDLTIPDVTVDSGDTRGIGETTLQPAQVDISTSHDPISDVTGASSHPTIISGEDNAIAVLDVSPIEPPTKRIALATRGASATPHVSVISGTTEFGQSSDLNVFVNATFSGDSIGYTEEIPLEPLNPFQEFEIESPPKTSTPRDVLNRAIGRARDLYNRRVQQIPTRNPALLTQPSRAIVFGFENPAFDADITQTFERDLEQVAAAPDADFADIVTIGRPRFSETDAGQIRVSRLGRRGTIKTRSGVQIGQAVHFYYDLSTIDTADAIELSTLGQHSGEQSIVDAMIESSLIDPFEMPDPTFTEEQQLLDPLTEDFSQSHLVLTSSRRGTSFTIPTIPPGLGLRIYVDDVGSDLFVSYPESRVIPAGGLPTEPFVPLEPALLSDIFSTDFVYRPSLYRKKRKRLEMF</sequence>
<keyword id="KW-0002">3D-structure</keyword>
<keyword id="KW-0167">Capsid protein</keyword>
<keyword id="KW-1176">Cytoplasmic inwards viral transport</keyword>
<keyword id="KW-1015">Disulfide bond</keyword>
<keyword id="KW-0238">DNA-binding</keyword>
<keyword id="KW-1039">Host endosome</keyword>
<keyword id="KW-1040">Host Golgi apparatus</keyword>
<keyword id="KW-1048">Host nucleus</keyword>
<keyword id="KW-0945">Host-virus interaction</keyword>
<keyword id="KW-0426">Late protein</keyword>
<keyword id="KW-1177">Microtubular inwards viral transport</keyword>
<keyword id="KW-0597">Phosphoprotein</keyword>
<keyword id="KW-1185">Reference proteome</keyword>
<keyword id="KW-1163">Viral penetration into host nucleus</keyword>
<keyword id="KW-0946">Virion</keyword>
<keyword id="KW-1160">Virus entry into host cell</keyword>
<organismHost>
    <name type="scientific">Homo sapiens</name>
    <name type="common">Human</name>
    <dbReference type="NCBI Taxonomy" id="9606"/>
</organismHost>